<proteinExistence type="inferred from homology"/>
<protein>
    <recommendedName>
        <fullName evidence="1">Small ribosomal subunit protein uS11</fullName>
    </recommendedName>
    <alternativeName>
        <fullName evidence="2">30S ribosomal protein S11</fullName>
    </alternativeName>
</protein>
<keyword id="KW-0687">Ribonucleoprotein</keyword>
<keyword id="KW-0689">Ribosomal protein</keyword>
<keyword id="KW-0694">RNA-binding</keyword>
<keyword id="KW-0699">rRNA-binding</keyword>
<dbReference type="EMBL" id="CP000030">
    <property type="protein sequence ID" value="AAV86800.1"/>
    <property type="status" value="ALT_INIT"/>
    <property type="molecule type" value="Genomic_DNA"/>
</dbReference>
<dbReference type="RefSeq" id="WP_010268062.1">
    <property type="nucleotide sequence ID" value="NZ_AFMU01000034.1"/>
</dbReference>
<dbReference type="SMR" id="Q5PA80"/>
<dbReference type="GeneID" id="7397856"/>
<dbReference type="KEGG" id="ama:AM888"/>
<dbReference type="PATRIC" id="fig|320483.3.peg.767"/>
<dbReference type="HOGENOM" id="CLU_072439_5_0_5"/>
<dbReference type="GO" id="GO:1990904">
    <property type="term" value="C:ribonucleoprotein complex"/>
    <property type="evidence" value="ECO:0007669"/>
    <property type="project" value="UniProtKB-KW"/>
</dbReference>
<dbReference type="GO" id="GO:0005840">
    <property type="term" value="C:ribosome"/>
    <property type="evidence" value="ECO:0007669"/>
    <property type="project" value="UniProtKB-KW"/>
</dbReference>
<dbReference type="GO" id="GO:0019843">
    <property type="term" value="F:rRNA binding"/>
    <property type="evidence" value="ECO:0007669"/>
    <property type="project" value="UniProtKB-UniRule"/>
</dbReference>
<dbReference type="GO" id="GO:0003735">
    <property type="term" value="F:structural constituent of ribosome"/>
    <property type="evidence" value="ECO:0007669"/>
    <property type="project" value="InterPro"/>
</dbReference>
<dbReference type="GO" id="GO:0006412">
    <property type="term" value="P:translation"/>
    <property type="evidence" value="ECO:0007669"/>
    <property type="project" value="UniProtKB-UniRule"/>
</dbReference>
<dbReference type="Gene3D" id="3.30.420.80">
    <property type="entry name" value="Ribosomal protein S11"/>
    <property type="match status" value="1"/>
</dbReference>
<dbReference type="HAMAP" id="MF_01310">
    <property type="entry name" value="Ribosomal_uS11"/>
    <property type="match status" value="1"/>
</dbReference>
<dbReference type="InterPro" id="IPR001971">
    <property type="entry name" value="Ribosomal_uS11"/>
</dbReference>
<dbReference type="InterPro" id="IPR019981">
    <property type="entry name" value="Ribosomal_uS11_bac-type"/>
</dbReference>
<dbReference type="InterPro" id="IPR036967">
    <property type="entry name" value="Ribosomal_uS11_sf"/>
</dbReference>
<dbReference type="NCBIfam" id="NF003698">
    <property type="entry name" value="PRK05309.1"/>
    <property type="match status" value="1"/>
</dbReference>
<dbReference type="NCBIfam" id="TIGR03632">
    <property type="entry name" value="uS11_bact"/>
    <property type="match status" value="1"/>
</dbReference>
<dbReference type="PANTHER" id="PTHR11759">
    <property type="entry name" value="40S RIBOSOMAL PROTEIN S14/30S RIBOSOMAL PROTEIN S11"/>
    <property type="match status" value="1"/>
</dbReference>
<dbReference type="Pfam" id="PF00411">
    <property type="entry name" value="Ribosomal_S11"/>
    <property type="match status" value="1"/>
</dbReference>
<dbReference type="PIRSF" id="PIRSF002131">
    <property type="entry name" value="Ribosomal_S11"/>
    <property type="match status" value="1"/>
</dbReference>
<dbReference type="SUPFAM" id="SSF53137">
    <property type="entry name" value="Translational machinery components"/>
    <property type="match status" value="1"/>
</dbReference>
<sequence length="124" mass="13315">MAVVKKRRNVVVGEVHIYATYNNVIVTIADQQGHVLVTTSAGACNFKGSKKATPYAAQETVARAVKAVVERNGMRTVSVCISGPGAGREAAIRAVQTCNLNVTSIRDTTKLPHNGCKLPKRRRV</sequence>
<comment type="function">
    <text evidence="1">Located on the platform of the 30S subunit, it bridges several disparate RNA helices of the 16S rRNA. Forms part of the Shine-Dalgarno cleft in the 70S ribosome.</text>
</comment>
<comment type="subunit">
    <text evidence="1">Part of the 30S ribosomal subunit. Interacts with proteins S7 and S18. Binds to IF-3.</text>
</comment>
<comment type="similarity">
    <text evidence="1">Belongs to the universal ribosomal protein uS11 family.</text>
</comment>
<comment type="sequence caution" evidence="2">
    <conflict type="erroneous initiation">
        <sequence resource="EMBL-CDS" id="AAV86800"/>
    </conflict>
</comment>
<reference key="1">
    <citation type="journal article" date="2005" name="Proc. Natl. Acad. Sci. U.S.A.">
        <title>Complete genome sequencing of Anaplasma marginale reveals that the surface is skewed to two superfamilies of outer membrane proteins.</title>
        <authorList>
            <person name="Brayton K.A."/>
            <person name="Kappmeyer L.S."/>
            <person name="Herndon D.R."/>
            <person name="Dark M.J."/>
            <person name="Tibbals D.L."/>
            <person name="Palmer G.H."/>
            <person name="McGuire T.C."/>
            <person name="Knowles D.P. Jr."/>
        </authorList>
    </citation>
    <scope>NUCLEOTIDE SEQUENCE [LARGE SCALE GENOMIC DNA]</scope>
    <source>
        <strain>St. Maries</strain>
    </source>
</reference>
<name>RS11_ANAMM</name>
<organism>
    <name type="scientific">Anaplasma marginale (strain St. Maries)</name>
    <dbReference type="NCBI Taxonomy" id="234826"/>
    <lineage>
        <taxon>Bacteria</taxon>
        <taxon>Pseudomonadati</taxon>
        <taxon>Pseudomonadota</taxon>
        <taxon>Alphaproteobacteria</taxon>
        <taxon>Rickettsiales</taxon>
        <taxon>Anaplasmataceae</taxon>
        <taxon>Anaplasma</taxon>
    </lineage>
</organism>
<gene>
    <name evidence="1" type="primary">rpsK</name>
    <name type="ordered locus">AM888</name>
</gene>
<evidence type="ECO:0000255" key="1">
    <source>
        <dbReference type="HAMAP-Rule" id="MF_01310"/>
    </source>
</evidence>
<evidence type="ECO:0000305" key="2"/>
<accession>Q5PA80</accession>
<feature type="chain" id="PRO_0000294712" description="Small ribosomal subunit protein uS11">
    <location>
        <begin position="1"/>
        <end position="124"/>
    </location>
</feature>